<proteinExistence type="predicted"/>
<sequence>MGSLKDAEKEGLNVCSDLSGHVSIARYIEEEYEVLIF</sequence>
<dbReference type="EMBL" id="AE000782">
    <property type="protein sequence ID" value="AAB90970.1"/>
    <property type="molecule type" value="Genomic_DNA"/>
</dbReference>
<dbReference type="PIR" id="D69283">
    <property type="entry name" value="D69283"/>
</dbReference>
<dbReference type="STRING" id="224325.AF_0268"/>
<dbReference type="PaxDb" id="224325-AF_0268"/>
<dbReference type="EnsemblBacteria" id="AAB90970">
    <property type="protein sequence ID" value="AAB90970"/>
    <property type="gene ID" value="AF_0268"/>
</dbReference>
<dbReference type="KEGG" id="afu:AF_0268"/>
<dbReference type="HOGENOM" id="CLU_3338239_0_0_2"/>
<dbReference type="Proteomes" id="UP000002199">
    <property type="component" value="Chromosome"/>
</dbReference>
<protein>
    <recommendedName>
        <fullName>Uncharacterized protein AF_0268</fullName>
    </recommendedName>
</protein>
<feature type="chain" id="PRO_0000127858" description="Uncharacterized protein AF_0268">
    <location>
        <begin position="1"/>
        <end position="37"/>
    </location>
</feature>
<gene>
    <name type="ordered locus">AF_0268</name>
</gene>
<organism>
    <name type="scientific">Archaeoglobus fulgidus (strain ATCC 49558 / DSM 4304 / JCM 9628 / NBRC 100126 / VC-16)</name>
    <dbReference type="NCBI Taxonomy" id="224325"/>
    <lineage>
        <taxon>Archaea</taxon>
        <taxon>Methanobacteriati</taxon>
        <taxon>Methanobacteriota</taxon>
        <taxon>Archaeoglobi</taxon>
        <taxon>Archaeoglobales</taxon>
        <taxon>Archaeoglobaceae</taxon>
        <taxon>Archaeoglobus</taxon>
    </lineage>
</organism>
<reference key="1">
    <citation type="journal article" date="1997" name="Nature">
        <title>The complete genome sequence of the hyperthermophilic, sulphate-reducing archaeon Archaeoglobus fulgidus.</title>
        <authorList>
            <person name="Klenk H.-P."/>
            <person name="Clayton R.A."/>
            <person name="Tomb J.-F."/>
            <person name="White O."/>
            <person name="Nelson K.E."/>
            <person name="Ketchum K.A."/>
            <person name="Dodson R.J."/>
            <person name="Gwinn M.L."/>
            <person name="Hickey E.K."/>
            <person name="Peterson J.D."/>
            <person name="Richardson D.L."/>
            <person name="Kerlavage A.R."/>
            <person name="Graham D.E."/>
            <person name="Kyrpides N.C."/>
            <person name="Fleischmann R.D."/>
            <person name="Quackenbush J."/>
            <person name="Lee N.H."/>
            <person name="Sutton G.G."/>
            <person name="Gill S.R."/>
            <person name="Kirkness E.F."/>
            <person name="Dougherty B.A."/>
            <person name="McKenney K."/>
            <person name="Adams M.D."/>
            <person name="Loftus B.J."/>
            <person name="Peterson S.N."/>
            <person name="Reich C.I."/>
            <person name="McNeil L.K."/>
            <person name="Badger J.H."/>
            <person name="Glodek A."/>
            <person name="Zhou L."/>
            <person name="Overbeek R."/>
            <person name="Gocayne J.D."/>
            <person name="Weidman J.F."/>
            <person name="McDonald L.A."/>
            <person name="Utterback T.R."/>
            <person name="Cotton M.D."/>
            <person name="Spriggs T."/>
            <person name="Artiach P."/>
            <person name="Kaine B.P."/>
            <person name="Sykes S.M."/>
            <person name="Sadow P.W."/>
            <person name="D'Andrea K.P."/>
            <person name="Bowman C."/>
            <person name="Fujii C."/>
            <person name="Garland S.A."/>
            <person name="Mason T.M."/>
            <person name="Olsen G.J."/>
            <person name="Fraser C.M."/>
            <person name="Smith H.O."/>
            <person name="Woese C.R."/>
            <person name="Venter J.C."/>
        </authorList>
    </citation>
    <scope>NUCLEOTIDE SEQUENCE [LARGE SCALE GENOMIC DNA]</scope>
    <source>
        <strain>ATCC 49558 / DSM 4304 / JCM 9628 / NBRC 100126 / VC-16</strain>
    </source>
</reference>
<name>Y268_ARCFU</name>
<accession>O29971</accession>
<keyword id="KW-1185">Reference proteome</keyword>